<proteinExistence type="evidence at protein level"/>
<keyword id="KW-0002">3D-structure</keyword>
<keyword id="KW-0903">Direct protein sequencing</keyword>
<keyword id="KW-1015">Disulfide bond</keyword>
<keyword id="KW-0249">Electron transport</keyword>
<keyword id="KW-0349">Heme</keyword>
<keyword id="KW-0408">Iron</keyword>
<keyword id="KW-0479">Metal-binding</keyword>
<keyword id="KW-0813">Transport</keyword>
<name>CYC5_AZOVI</name>
<feature type="chain" id="PRO_0000108366" description="Cytochrome c5">
    <location>
        <begin position="1"/>
        <end position="83"/>
    </location>
</feature>
<feature type="binding site" description="covalent">
    <location>
        <position position="15"/>
    </location>
    <ligand>
        <name>heme c</name>
        <dbReference type="ChEBI" id="CHEBI:61717"/>
    </ligand>
</feature>
<feature type="binding site" description="covalent">
    <location>
        <position position="18"/>
    </location>
    <ligand>
        <name>heme c</name>
        <dbReference type="ChEBI" id="CHEBI:61717"/>
    </ligand>
</feature>
<feature type="binding site" description="axial binding residue">
    <location>
        <position position="19"/>
    </location>
    <ligand>
        <name>heme c</name>
        <dbReference type="ChEBI" id="CHEBI:61717"/>
    </ligand>
    <ligandPart>
        <name>Fe</name>
        <dbReference type="ChEBI" id="CHEBI:18248"/>
    </ligandPart>
</feature>
<feature type="binding site" description="axial binding residue">
    <location>
        <position position="59"/>
    </location>
    <ligand>
        <name>heme c</name>
        <dbReference type="ChEBI" id="CHEBI:61717"/>
    </ligand>
    <ligandPart>
        <name>Fe</name>
        <dbReference type="ChEBI" id="CHEBI:18248"/>
    </ligandPart>
</feature>
<feature type="disulfide bond">
    <location>
        <begin position="65"/>
        <end position="68"/>
    </location>
</feature>
<feature type="helix" evidence="2">
    <location>
        <begin position="8"/>
        <end position="13"/>
    </location>
</feature>
<feature type="helix" evidence="2">
    <location>
        <begin position="16"/>
        <end position="19"/>
    </location>
</feature>
<feature type="turn" evidence="2">
    <location>
        <begin position="20"/>
        <end position="25"/>
    </location>
</feature>
<feature type="helix" evidence="2">
    <location>
        <begin position="32"/>
        <end position="41"/>
    </location>
</feature>
<feature type="turn" evidence="2">
    <location>
        <begin position="46"/>
        <end position="48"/>
    </location>
</feature>
<feature type="helix" evidence="2">
    <location>
        <begin position="49"/>
        <end position="54"/>
    </location>
</feature>
<feature type="strand" evidence="2">
    <location>
        <begin position="61"/>
        <end position="64"/>
    </location>
</feature>
<feature type="helix" evidence="2">
    <location>
        <begin position="70"/>
        <end position="81"/>
    </location>
</feature>
<protein>
    <recommendedName>
        <fullName>Cytochrome c5</fullName>
    </recommendedName>
</protein>
<dbReference type="PDB" id="1CC5">
    <property type="method" value="X-ray"/>
    <property type="resolution" value="2.50 A"/>
    <property type="chains" value="A=1-83"/>
</dbReference>
<dbReference type="PDBsum" id="1CC5"/>
<dbReference type="SMR" id="P11732"/>
<dbReference type="EvolutionaryTrace" id="P11732"/>
<dbReference type="GO" id="GO:0009055">
    <property type="term" value="F:electron transfer activity"/>
    <property type="evidence" value="ECO:0007669"/>
    <property type="project" value="InterPro"/>
</dbReference>
<dbReference type="GO" id="GO:0020037">
    <property type="term" value="F:heme binding"/>
    <property type="evidence" value="ECO:0007669"/>
    <property type="project" value="InterPro"/>
</dbReference>
<dbReference type="GO" id="GO:0005506">
    <property type="term" value="F:iron ion binding"/>
    <property type="evidence" value="ECO:0007669"/>
    <property type="project" value="InterPro"/>
</dbReference>
<dbReference type="Gene3D" id="1.10.760.10">
    <property type="entry name" value="Cytochrome c-like domain"/>
    <property type="match status" value="1"/>
</dbReference>
<dbReference type="InterPro" id="IPR009056">
    <property type="entry name" value="Cyt_c-like_dom"/>
</dbReference>
<dbReference type="InterPro" id="IPR036909">
    <property type="entry name" value="Cyt_c-like_dom_sf"/>
</dbReference>
<dbReference type="InterPro" id="IPR002323">
    <property type="entry name" value="Cyt_CIE"/>
</dbReference>
<dbReference type="PANTHER" id="PTHR40942">
    <property type="match status" value="1"/>
</dbReference>
<dbReference type="PANTHER" id="PTHR40942:SF4">
    <property type="entry name" value="CYTOCHROME C5"/>
    <property type="match status" value="1"/>
</dbReference>
<dbReference type="Pfam" id="PF13442">
    <property type="entry name" value="Cytochrome_CBB3"/>
    <property type="match status" value="1"/>
</dbReference>
<dbReference type="PRINTS" id="PR00607">
    <property type="entry name" value="CYTCHROMECIE"/>
</dbReference>
<dbReference type="SUPFAM" id="SSF46626">
    <property type="entry name" value="Cytochrome c"/>
    <property type="match status" value="1"/>
</dbReference>
<dbReference type="PROSITE" id="PS51007">
    <property type="entry name" value="CYTC"/>
    <property type="match status" value="1"/>
</dbReference>
<comment type="function">
    <text>It is unreactive with cytochrome c reductase or oxidase.</text>
</comment>
<comment type="subunit">
    <text>Homodimer.</text>
</comment>
<comment type="PTM">
    <text>Binds 1 heme c group covalently per subunit.</text>
</comment>
<comment type="similarity">
    <text evidence="1">Belongs to the cytochrome c family.</text>
</comment>
<sequence length="83" mass="8178">GGGARSGDDVVAKYCNACHGTGLLNAPKVGDSAAWKTRADAKGGLDGLLAQSLSGLNAMPPKGTCADCSDDELKAAIGKMSGL</sequence>
<organism>
    <name type="scientific">Azotobacter vinelandii</name>
    <dbReference type="NCBI Taxonomy" id="354"/>
    <lineage>
        <taxon>Bacteria</taxon>
        <taxon>Pseudomonadati</taxon>
        <taxon>Pseudomonadota</taxon>
        <taxon>Gammaproteobacteria</taxon>
        <taxon>Pseudomonadales</taxon>
        <taxon>Pseudomonadaceae</taxon>
        <taxon>Azotobacter</taxon>
    </lineage>
</organism>
<reference key="1">
    <citation type="journal article" date="1985" name="J. Mol. Biol.">
        <title>Crystal structure of Azotobacter cytochrome c5 at 2.5-A resolution.</title>
        <authorList>
            <person name="Carter D.C."/>
            <person name="Melis K.A."/>
            <person name="O'Donnell S.E."/>
            <person name="Burgess B.K."/>
            <person name="Furey W.F. Jr."/>
            <person name="Wang B.-C."/>
            <person name="Stout C.D."/>
        </authorList>
    </citation>
    <scope>PROTEIN SEQUENCE</scope>
    <scope>X-RAY CRYSTALLOGRAPHY (2.5 ANGSTROMS)</scope>
</reference>
<evidence type="ECO:0000305" key="1"/>
<evidence type="ECO:0007829" key="2">
    <source>
        <dbReference type="PDB" id="1CC5"/>
    </source>
</evidence>
<accession>P11732</accession>